<keyword id="KW-1003">Cell membrane</keyword>
<keyword id="KW-0297">G-protein coupled receptor</keyword>
<keyword id="KW-0325">Glycoprotein</keyword>
<keyword id="KW-0472">Membrane</keyword>
<keyword id="KW-0597">Phosphoprotein</keyword>
<keyword id="KW-0675">Receptor</keyword>
<keyword id="KW-1185">Reference proteome</keyword>
<keyword id="KW-0732">Signal</keyword>
<keyword id="KW-0807">Transducer</keyword>
<keyword id="KW-0812">Transmembrane</keyword>
<keyword id="KW-1133">Transmembrane helix</keyword>
<evidence type="ECO:0000250" key="1"/>
<evidence type="ECO:0000250" key="2">
    <source>
        <dbReference type="UniProtKB" id="Q9NQ84"/>
    </source>
</evidence>
<evidence type="ECO:0000255" key="3"/>
<evidence type="ECO:0000305" key="4"/>
<evidence type="ECO:0007744" key="5">
    <source>
    </source>
</evidence>
<accession>Q8K3J9</accession>
<accession>Q8K0H0</accession>
<reference key="1">
    <citation type="submission" date="2002-02" db="EMBL/GenBank/DDBJ databases">
        <title>Molecular cloning and characterization of mouse retinoic acid-inducible orphan G protein-coupled receptors.</title>
        <authorList>
            <person name="Tao Q."/>
            <person name="Lotan R."/>
        </authorList>
    </citation>
    <scope>NUCLEOTIDE SEQUENCE [MRNA]</scope>
    <source>
        <strain>BALB/cJ</strain>
        <tissue>Kidney</tissue>
    </source>
</reference>
<reference key="2">
    <citation type="journal article" date="2004" name="Genome Res.">
        <title>The status, quality, and expansion of the NIH full-length cDNA project: the Mammalian Gene Collection (MGC).</title>
        <authorList>
            <consortium name="The MGC Project Team"/>
        </authorList>
    </citation>
    <scope>NUCLEOTIDE SEQUENCE [LARGE SCALE MRNA]</scope>
    <source>
        <tissue>Kidney</tissue>
    </source>
</reference>
<reference key="3">
    <citation type="journal article" date="2010" name="Cell">
        <title>A tissue-specific atlas of mouse protein phosphorylation and expression.</title>
        <authorList>
            <person name="Huttlin E.L."/>
            <person name="Jedrychowski M.P."/>
            <person name="Elias J.E."/>
            <person name="Goswami T."/>
            <person name="Rad R."/>
            <person name="Beausoleil S.A."/>
            <person name="Villen J."/>
            <person name="Haas W."/>
            <person name="Sowa M.E."/>
            <person name="Gygi S.P."/>
        </authorList>
    </citation>
    <scope>PHOSPHORYLATION [LARGE SCALE ANALYSIS] AT SER-402; SER-405; TYR-413 AND THR-422</scope>
    <scope>IDENTIFICATION BY MASS SPECTROMETRY [LARGE SCALE ANALYSIS]</scope>
    <source>
        <tissue>Kidney</tissue>
    </source>
</reference>
<sequence>MATHRTLLMCLGLPLFFPGALAQNHAPPGCSPDLDPLYYNLCDRSGAWGIVSEAVAGAGIITTFVLTIILVASLPFVQDTKKRSLLGTQVFFLLGTLGLFCLVFACVVKPDFSTCASRRFLFGVLFAICFSCLVAHVLSLNFLTRKNHGPRGWVIFTVALLLTLVEVIINTEWLIITLVRGGGQVSPLGNVSADSTMTSPCAIANMDFVMALIYVMLLLLTAFLGAWPTLCGRFKRWRKHGVFVLLTTVISIAIWVVWIVMYTYGNEQHHSPTWDDPTLAIALAANAWTFVLFYVIPEVSQVTKPSPEQSYQGDMYPTRGVGYETILKEQTGQSMFVENKAFSMDEPASAKRPVSPYSGYNGQLLTSVYQPTEMALMHKGPSEGAYDVILPRATANSQVMGSANSTLRAEDMYMVQSHQVATPPKDGKISQVFRNPYVWD</sequence>
<protein>
    <recommendedName>
        <fullName>G-protein coupled receptor family C group 5 member C</fullName>
    </recommendedName>
    <alternativeName>
        <fullName>Retinoic acid-induced gene 3 protein</fullName>
        <shortName>RAIG-3</shortName>
    </alternativeName>
</protein>
<proteinExistence type="evidence at protein level"/>
<feature type="signal peptide" evidence="3">
    <location>
        <begin position="1"/>
        <end position="22"/>
    </location>
</feature>
<feature type="chain" id="PRO_0000012968" description="G-protein coupled receptor family C group 5 member C">
    <location>
        <begin position="23"/>
        <end position="440"/>
    </location>
</feature>
<feature type="topological domain" description="Extracellular" evidence="3">
    <location>
        <begin position="23"/>
        <end position="49"/>
    </location>
</feature>
<feature type="transmembrane region" description="Helical; Name=1" evidence="3">
    <location>
        <begin position="50"/>
        <end position="70"/>
    </location>
</feature>
<feature type="topological domain" description="Cytoplasmic" evidence="3">
    <location>
        <begin position="71"/>
        <end position="84"/>
    </location>
</feature>
<feature type="transmembrane region" description="Helical; Name=2" evidence="3">
    <location>
        <begin position="85"/>
        <end position="105"/>
    </location>
</feature>
<feature type="topological domain" description="Extracellular" evidence="3">
    <location>
        <begin position="106"/>
        <end position="119"/>
    </location>
</feature>
<feature type="transmembrane region" description="Helical; Name=3" evidence="3">
    <location>
        <begin position="120"/>
        <end position="140"/>
    </location>
</feature>
<feature type="topological domain" description="Cytoplasmic" evidence="3">
    <location>
        <begin position="141"/>
        <end position="155"/>
    </location>
</feature>
<feature type="transmembrane region" description="Helical; Name=4" evidence="3">
    <location>
        <begin position="156"/>
        <end position="176"/>
    </location>
</feature>
<feature type="topological domain" description="Extracellular" evidence="3">
    <location>
        <begin position="177"/>
        <end position="207"/>
    </location>
</feature>
<feature type="transmembrane region" description="Helical; Name=5" evidence="3">
    <location>
        <begin position="208"/>
        <end position="228"/>
    </location>
</feature>
<feature type="topological domain" description="Cytoplasmic" evidence="3">
    <location>
        <begin position="229"/>
        <end position="240"/>
    </location>
</feature>
<feature type="transmembrane region" description="Helical; Name=6" evidence="3">
    <location>
        <begin position="241"/>
        <end position="261"/>
    </location>
</feature>
<feature type="topological domain" description="Extracellular" evidence="3">
    <location>
        <begin position="262"/>
        <end position="278"/>
    </location>
</feature>
<feature type="transmembrane region" description="Helical; Name=7" evidence="3">
    <location>
        <begin position="279"/>
        <end position="299"/>
    </location>
</feature>
<feature type="topological domain" description="Cytoplasmic" evidence="3">
    <location>
        <begin position="300"/>
        <end position="440"/>
    </location>
</feature>
<feature type="modified residue" description="Phosphoserine" evidence="2">
    <location>
        <position position="343"/>
    </location>
</feature>
<feature type="modified residue" description="Phosphoserine" evidence="2">
    <location>
        <position position="382"/>
    </location>
</feature>
<feature type="modified residue" description="Phosphoserine" evidence="5">
    <location>
        <position position="402"/>
    </location>
</feature>
<feature type="modified residue" description="Phosphoserine" evidence="5">
    <location>
        <position position="405"/>
    </location>
</feature>
<feature type="modified residue" description="Phosphotyrosine" evidence="5">
    <location>
        <position position="413"/>
    </location>
</feature>
<feature type="modified residue" description="Phosphothreonine" evidence="5">
    <location>
        <position position="422"/>
    </location>
</feature>
<feature type="glycosylation site" description="N-linked (GlcNAc...) asparagine" evidence="3">
    <location>
        <position position="190"/>
    </location>
</feature>
<feature type="sequence conflict" description="In Ref. 1; AAL87525." evidence="4" ref="1">
    <original>S</original>
    <variation>L</variation>
    <location>
        <position position="52"/>
    </location>
</feature>
<organism>
    <name type="scientific">Mus musculus</name>
    <name type="common">Mouse</name>
    <dbReference type="NCBI Taxonomy" id="10090"/>
    <lineage>
        <taxon>Eukaryota</taxon>
        <taxon>Metazoa</taxon>
        <taxon>Chordata</taxon>
        <taxon>Craniata</taxon>
        <taxon>Vertebrata</taxon>
        <taxon>Euteleostomi</taxon>
        <taxon>Mammalia</taxon>
        <taxon>Eutheria</taxon>
        <taxon>Euarchontoglires</taxon>
        <taxon>Glires</taxon>
        <taxon>Rodentia</taxon>
        <taxon>Myomorpha</taxon>
        <taxon>Muroidea</taxon>
        <taxon>Muridae</taxon>
        <taxon>Murinae</taxon>
        <taxon>Mus</taxon>
        <taxon>Mus</taxon>
    </lineage>
</organism>
<gene>
    <name type="primary">Gprc5c</name>
    <name type="synonym">Raig3</name>
</gene>
<comment type="function">
    <text evidence="1">This retinoic acid-inducible G-protein coupled receptor provide evidence for a possible interaction between retinoid and G-protein signaling pathways.</text>
</comment>
<comment type="subcellular location">
    <subcellularLocation>
        <location>Cell membrane</location>
        <topology>Multi-pass membrane protein</topology>
    </subcellularLocation>
</comment>
<comment type="similarity">
    <text evidence="4">Belongs to the G-protein coupled receptor 3 family.</text>
</comment>
<dbReference type="EMBL" id="AY079516">
    <property type="protein sequence ID" value="AAL87525.1"/>
    <property type="molecule type" value="mRNA"/>
</dbReference>
<dbReference type="EMBL" id="BC031439">
    <property type="protein sequence ID" value="AAH31439.1"/>
    <property type="molecule type" value="mRNA"/>
</dbReference>
<dbReference type="CCDS" id="CCDS25612.1"/>
<dbReference type="RefSeq" id="NP_001103808.1">
    <property type="nucleotide sequence ID" value="NM_001110338.1"/>
</dbReference>
<dbReference type="RefSeq" id="NP_671750.2">
    <property type="nucleotide sequence ID" value="NM_147217.3"/>
</dbReference>
<dbReference type="RefSeq" id="XP_006534228.1">
    <property type="nucleotide sequence ID" value="XM_006534165.1"/>
</dbReference>
<dbReference type="SMR" id="Q8K3J9"/>
<dbReference type="FunCoup" id="Q8K3J9">
    <property type="interactions" value="82"/>
</dbReference>
<dbReference type="STRING" id="10090.ENSMUSP00000061760"/>
<dbReference type="GlyCosmos" id="Q8K3J9">
    <property type="glycosylation" value="1 site, No reported glycans"/>
</dbReference>
<dbReference type="GlyGen" id="Q8K3J9">
    <property type="glycosylation" value="1 site"/>
</dbReference>
<dbReference type="iPTMnet" id="Q8K3J9"/>
<dbReference type="PhosphoSitePlus" id="Q8K3J9"/>
<dbReference type="SwissPalm" id="Q8K3J9"/>
<dbReference type="jPOST" id="Q8K3J9"/>
<dbReference type="PaxDb" id="10090-ENSMUSP00000061760"/>
<dbReference type="ProteomicsDB" id="271034"/>
<dbReference type="DNASU" id="70355"/>
<dbReference type="GeneID" id="70355"/>
<dbReference type="KEGG" id="mmu:70355"/>
<dbReference type="AGR" id="MGI:1917605"/>
<dbReference type="CTD" id="55890"/>
<dbReference type="MGI" id="MGI:1917605">
    <property type="gene designation" value="Gprc5c"/>
</dbReference>
<dbReference type="eggNOG" id="ENOG502QQEH">
    <property type="taxonomic scope" value="Eukaryota"/>
</dbReference>
<dbReference type="InParanoid" id="Q8K3J9"/>
<dbReference type="OrthoDB" id="9880600at2759"/>
<dbReference type="BioGRID-ORCS" id="70355">
    <property type="hits" value="1 hit in 76 CRISPR screens"/>
</dbReference>
<dbReference type="ChiTaRS" id="Gprc5c">
    <property type="organism name" value="mouse"/>
</dbReference>
<dbReference type="PRO" id="PR:Q8K3J9"/>
<dbReference type="Proteomes" id="UP000000589">
    <property type="component" value="Unplaced"/>
</dbReference>
<dbReference type="RNAct" id="Q8K3J9">
    <property type="molecule type" value="protein"/>
</dbReference>
<dbReference type="GO" id="GO:0005739">
    <property type="term" value="C:mitochondrion"/>
    <property type="evidence" value="ECO:0007005"/>
    <property type="project" value="MGI"/>
</dbReference>
<dbReference type="GO" id="GO:0005886">
    <property type="term" value="C:plasma membrane"/>
    <property type="evidence" value="ECO:0007669"/>
    <property type="project" value="UniProtKB-SubCell"/>
</dbReference>
<dbReference type="GO" id="GO:0043235">
    <property type="term" value="C:receptor complex"/>
    <property type="evidence" value="ECO:0000266"/>
    <property type="project" value="MGI"/>
</dbReference>
<dbReference type="GO" id="GO:0004930">
    <property type="term" value="F:G protein-coupled receptor activity"/>
    <property type="evidence" value="ECO:0007669"/>
    <property type="project" value="UniProtKB-KW"/>
</dbReference>
<dbReference type="GO" id="GO:0005118">
    <property type="term" value="F:sevenless binding"/>
    <property type="evidence" value="ECO:0007669"/>
    <property type="project" value="InterPro"/>
</dbReference>
<dbReference type="GO" id="GO:0007601">
    <property type="term" value="P:visual perception"/>
    <property type="evidence" value="ECO:0007669"/>
    <property type="project" value="InterPro"/>
</dbReference>
<dbReference type="CDD" id="cd15277">
    <property type="entry name" value="7tmC_RAIG3_GPRC5C"/>
    <property type="match status" value="1"/>
</dbReference>
<dbReference type="InterPro" id="IPR002956">
    <property type="entry name" value="Bride_of_7less"/>
</dbReference>
<dbReference type="InterPro" id="IPR017978">
    <property type="entry name" value="GPCR_3_C"/>
</dbReference>
<dbReference type="InterPro" id="IPR051753">
    <property type="entry name" value="RA-inducible_GPCR3"/>
</dbReference>
<dbReference type="PANTHER" id="PTHR14511">
    <property type="entry name" value="G PROTEIN COUPLED RECEPTOR, CLASS C, GROUP 5"/>
    <property type="match status" value="1"/>
</dbReference>
<dbReference type="PANTHER" id="PTHR14511:SF15">
    <property type="entry name" value="G-PROTEIN COUPLED RECEPTOR FAMILY C GROUP 5 MEMBER C"/>
    <property type="match status" value="1"/>
</dbReference>
<dbReference type="Pfam" id="PF00003">
    <property type="entry name" value="7tm_3"/>
    <property type="match status" value="1"/>
</dbReference>
<dbReference type="PRINTS" id="PR01223">
    <property type="entry name" value="BRIDEOF7LESS"/>
</dbReference>
<dbReference type="PROSITE" id="PS50259">
    <property type="entry name" value="G_PROTEIN_RECEP_F3_4"/>
    <property type="match status" value="1"/>
</dbReference>
<name>GPC5C_MOUSE</name>